<organism>
    <name type="scientific">Madia sativa</name>
    <name type="common">Coast tarweed</name>
    <dbReference type="NCBI Taxonomy" id="149445"/>
    <lineage>
        <taxon>Eukaryota</taxon>
        <taxon>Viridiplantae</taxon>
        <taxon>Streptophyta</taxon>
        <taxon>Embryophyta</taxon>
        <taxon>Tracheophyta</taxon>
        <taxon>Spermatophyta</taxon>
        <taxon>Magnoliopsida</taxon>
        <taxon>eudicotyledons</taxon>
        <taxon>Gunneridae</taxon>
        <taxon>Pentapetalae</taxon>
        <taxon>asterids</taxon>
        <taxon>campanulids</taxon>
        <taxon>Asterales</taxon>
        <taxon>Asteraceae</taxon>
        <taxon>Asteroideae</taxon>
        <taxon>Heliantheae alliance</taxon>
        <taxon>Madieae</taxon>
        <taxon>Madiinae</taxon>
        <taxon>Madia</taxon>
    </lineage>
</organism>
<evidence type="ECO:0000255" key="1">
    <source>
        <dbReference type="HAMAP-Rule" id="MF_01351"/>
    </source>
</evidence>
<geneLocation type="chloroplast"/>
<accession>Q8HVP8</accession>
<name>NDHI_MADSA</name>
<proteinExistence type="inferred from homology"/>
<gene>
    <name evidence="1" type="primary">ndhI</name>
</gene>
<protein>
    <recommendedName>
        <fullName evidence="1">NAD(P)H-quinone oxidoreductase subunit I, chloroplastic</fullName>
        <ecNumber evidence="1">7.1.1.-</ecNumber>
    </recommendedName>
    <alternativeName>
        <fullName evidence="1">NAD(P)H dehydrogenase subunit I</fullName>
        <shortName evidence="1">NDH subunit I</shortName>
    </alternativeName>
    <alternativeName>
        <fullName evidence="1">NADH-plastoquinone oxidoreductase subunit I</fullName>
    </alternativeName>
</protein>
<reference key="1">
    <citation type="submission" date="2003-01" db="EMBL/GenBank/DDBJ databases">
        <title>Chloroplast DNA phylogeny of tribe Heliantheae (Asteraceae).</title>
        <authorList>
            <person name="Panero J.L."/>
            <person name="Baldwin B.G."/>
            <person name="Schilling E.E."/>
            <person name="Clevinger J.A."/>
        </authorList>
    </citation>
    <scope>NUCLEOTIDE SEQUENCE [GENOMIC DNA]</scope>
</reference>
<comment type="function">
    <text evidence="1">NDH shuttles electrons from NAD(P)H:plastoquinone, via FMN and iron-sulfur (Fe-S) centers, to quinones in the photosynthetic chain and possibly in a chloroplast respiratory chain. The immediate electron acceptor for the enzyme in this species is believed to be plastoquinone. Couples the redox reaction to proton translocation, and thus conserves the redox energy in a proton gradient.</text>
</comment>
<comment type="catalytic activity">
    <reaction evidence="1">
        <text>a plastoquinone + NADH + (n+1) H(+)(in) = a plastoquinol + NAD(+) + n H(+)(out)</text>
        <dbReference type="Rhea" id="RHEA:42608"/>
        <dbReference type="Rhea" id="RHEA-COMP:9561"/>
        <dbReference type="Rhea" id="RHEA-COMP:9562"/>
        <dbReference type="ChEBI" id="CHEBI:15378"/>
        <dbReference type="ChEBI" id="CHEBI:17757"/>
        <dbReference type="ChEBI" id="CHEBI:57540"/>
        <dbReference type="ChEBI" id="CHEBI:57945"/>
        <dbReference type="ChEBI" id="CHEBI:62192"/>
    </reaction>
</comment>
<comment type="catalytic activity">
    <reaction evidence="1">
        <text>a plastoquinone + NADPH + (n+1) H(+)(in) = a plastoquinol + NADP(+) + n H(+)(out)</text>
        <dbReference type="Rhea" id="RHEA:42612"/>
        <dbReference type="Rhea" id="RHEA-COMP:9561"/>
        <dbReference type="Rhea" id="RHEA-COMP:9562"/>
        <dbReference type="ChEBI" id="CHEBI:15378"/>
        <dbReference type="ChEBI" id="CHEBI:17757"/>
        <dbReference type="ChEBI" id="CHEBI:57783"/>
        <dbReference type="ChEBI" id="CHEBI:58349"/>
        <dbReference type="ChEBI" id="CHEBI:62192"/>
    </reaction>
</comment>
<comment type="cofactor">
    <cofactor evidence="1">
        <name>[4Fe-4S] cluster</name>
        <dbReference type="ChEBI" id="CHEBI:49883"/>
    </cofactor>
    <text evidence="1">Binds 2 [4Fe-4S] clusters per subunit.</text>
</comment>
<comment type="subunit">
    <text evidence="1">NDH is composed of at least 16 different subunits, 5 of which are encoded in the nucleus.</text>
</comment>
<comment type="subcellular location">
    <subcellularLocation>
        <location evidence="1">Plastid</location>
        <location evidence="1">Chloroplast thylakoid membrane</location>
        <topology evidence="1">Peripheral membrane protein</topology>
    </subcellularLocation>
</comment>
<comment type="similarity">
    <text evidence="1">Belongs to the complex I 23 kDa subunit family.</text>
</comment>
<sequence>MFPMVTEFMNYGQQTVRAARYIGQGFMITLSHANRLPVTIQYPYEKLITSERFRGRIHFEFDKCIACEVCVRVCPIDLPVVDWKLETDIRKKRLLNYSIDFGICIFCGNCVEYCPTNCLSMTEEYELSTYDRHELNYNQIALGRLPMSIIDDYTIRTILNLPEIKT</sequence>
<dbReference type="EC" id="7.1.1.-" evidence="1"/>
<dbReference type="EMBL" id="AF383815">
    <property type="protein sequence ID" value="AAN61756.1"/>
    <property type="molecule type" value="Genomic_DNA"/>
</dbReference>
<dbReference type="SMR" id="Q8HVP8"/>
<dbReference type="GO" id="GO:0009535">
    <property type="term" value="C:chloroplast thylakoid membrane"/>
    <property type="evidence" value="ECO:0007669"/>
    <property type="project" value="UniProtKB-SubCell"/>
</dbReference>
<dbReference type="GO" id="GO:0051539">
    <property type="term" value="F:4 iron, 4 sulfur cluster binding"/>
    <property type="evidence" value="ECO:0007669"/>
    <property type="project" value="UniProtKB-KW"/>
</dbReference>
<dbReference type="GO" id="GO:0005506">
    <property type="term" value="F:iron ion binding"/>
    <property type="evidence" value="ECO:0007669"/>
    <property type="project" value="UniProtKB-UniRule"/>
</dbReference>
<dbReference type="GO" id="GO:0008137">
    <property type="term" value="F:NADH dehydrogenase (ubiquinone) activity"/>
    <property type="evidence" value="ECO:0007669"/>
    <property type="project" value="InterPro"/>
</dbReference>
<dbReference type="GO" id="GO:0048038">
    <property type="term" value="F:quinone binding"/>
    <property type="evidence" value="ECO:0007669"/>
    <property type="project" value="UniProtKB-KW"/>
</dbReference>
<dbReference type="GO" id="GO:0019684">
    <property type="term" value="P:photosynthesis, light reaction"/>
    <property type="evidence" value="ECO:0007669"/>
    <property type="project" value="UniProtKB-UniRule"/>
</dbReference>
<dbReference type="FunFam" id="3.30.70.3270:FF:000006">
    <property type="entry name" value="NAD(P)H-quinone oxidoreductase subunit I, chloroplastic"/>
    <property type="match status" value="1"/>
</dbReference>
<dbReference type="Gene3D" id="3.30.70.3270">
    <property type="match status" value="1"/>
</dbReference>
<dbReference type="HAMAP" id="MF_01351">
    <property type="entry name" value="NDH1_NuoI"/>
    <property type="match status" value="1"/>
</dbReference>
<dbReference type="InterPro" id="IPR017896">
    <property type="entry name" value="4Fe4S_Fe-S-bd"/>
</dbReference>
<dbReference type="InterPro" id="IPR017900">
    <property type="entry name" value="4Fe4S_Fe_S_CS"/>
</dbReference>
<dbReference type="InterPro" id="IPR010226">
    <property type="entry name" value="NADH_quinone_OxRdtase_chainI"/>
</dbReference>
<dbReference type="InterPro" id="IPR004497">
    <property type="entry name" value="NDHI"/>
</dbReference>
<dbReference type="NCBIfam" id="TIGR00403">
    <property type="entry name" value="ndhI"/>
    <property type="match status" value="1"/>
</dbReference>
<dbReference type="NCBIfam" id="TIGR01971">
    <property type="entry name" value="NuoI"/>
    <property type="match status" value="1"/>
</dbReference>
<dbReference type="NCBIfam" id="NF004537">
    <property type="entry name" value="PRK05888.1-3"/>
    <property type="match status" value="1"/>
</dbReference>
<dbReference type="PANTHER" id="PTHR47275">
    <property type="entry name" value="NAD(P)H-QUINONE OXIDOREDUCTASE SUBUNIT I, CHLOROPLASTIC"/>
    <property type="match status" value="1"/>
</dbReference>
<dbReference type="PANTHER" id="PTHR47275:SF1">
    <property type="entry name" value="NAD(P)H-QUINONE OXIDOREDUCTASE SUBUNIT I, CHLOROPLASTIC"/>
    <property type="match status" value="1"/>
</dbReference>
<dbReference type="Pfam" id="PF00037">
    <property type="entry name" value="Fer4"/>
    <property type="match status" value="2"/>
</dbReference>
<dbReference type="SUPFAM" id="SSF54862">
    <property type="entry name" value="4Fe-4S ferredoxins"/>
    <property type="match status" value="1"/>
</dbReference>
<dbReference type="PROSITE" id="PS00198">
    <property type="entry name" value="4FE4S_FER_1"/>
    <property type="match status" value="2"/>
</dbReference>
<dbReference type="PROSITE" id="PS51379">
    <property type="entry name" value="4FE4S_FER_2"/>
    <property type="match status" value="2"/>
</dbReference>
<keyword id="KW-0004">4Fe-4S</keyword>
<keyword id="KW-0150">Chloroplast</keyword>
<keyword id="KW-0408">Iron</keyword>
<keyword id="KW-0411">Iron-sulfur</keyword>
<keyword id="KW-0472">Membrane</keyword>
<keyword id="KW-0479">Metal-binding</keyword>
<keyword id="KW-0520">NAD</keyword>
<keyword id="KW-0521">NADP</keyword>
<keyword id="KW-0934">Plastid</keyword>
<keyword id="KW-0618">Plastoquinone</keyword>
<keyword id="KW-0874">Quinone</keyword>
<keyword id="KW-0677">Repeat</keyword>
<keyword id="KW-0793">Thylakoid</keyword>
<keyword id="KW-1278">Translocase</keyword>
<feature type="chain" id="PRO_0000250813" description="NAD(P)H-quinone oxidoreductase subunit I, chloroplastic">
    <location>
        <begin position="1"/>
        <end position="166"/>
    </location>
</feature>
<feature type="domain" description="4Fe-4S ferredoxin-type 1" evidence="1">
    <location>
        <begin position="55"/>
        <end position="84"/>
    </location>
</feature>
<feature type="domain" description="4Fe-4S ferredoxin-type 2" evidence="1">
    <location>
        <begin position="95"/>
        <end position="124"/>
    </location>
</feature>
<feature type="binding site" evidence="1">
    <location>
        <position position="64"/>
    </location>
    <ligand>
        <name>[4Fe-4S] cluster</name>
        <dbReference type="ChEBI" id="CHEBI:49883"/>
        <label>1</label>
    </ligand>
</feature>
<feature type="binding site" evidence="1">
    <location>
        <position position="67"/>
    </location>
    <ligand>
        <name>[4Fe-4S] cluster</name>
        <dbReference type="ChEBI" id="CHEBI:49883"/>
        <label>1</label>
    </ligand>
</feature>
<feature type="binding site" evidence="1">
    <location>
        <position position="70"/>
    </location>
    <ligand>
        <name>[4Fe-4S] cluster</name>
        <dbReference type="ChEBI" id="CHEBI:49883"/>
        <label>1</label>
    </ligand>
</feature>
<feature type="binding site" evidence="1">
    <location>
        <position position="74"/>
    </location>
    <ligand>
        <name>[4Fe-4S] cluster</name>
        <dbReference type="ChEBI" id="CHEBI:49883"/>
        <label>2</label>
    </ligand>
</feature>
<feature type="binding site" evidence="1">
    <location>
        <position position="104"/>
    </location>
    <ligand>
        <name>[4Fe-4S] cluster</name>
        <dbReference type="ChEBI" id="CHEBI:49883"/>
        <label>2</label>
    </ligand>
</feature>
<feature type="binding site" evidence="1">
    <location>
        <position position="107"/>
    </location>
    <ligand>
        <name>[4Fe-4S] cluster</name>
        <dbReference type="ChEBI" id="CHEBI:49883"/>
        <label>2</label>
    </ligand>
</feature>
<feature type="binding site" evidence="1">
    <location>
        <position position="110"/>
    </location>
    <ligand>
        <name>[4Fe-4S] cluster</name>
        <dbReference type="ChEBI" id="CHEBI:49883"/>
        <label>2</label>
    </ligand>
</feature>
<feature type="binding site" evidence="1">
    <location>
        <position position="114"/>
    </location>
    <ligand>
        <name>[4Fe-4S] cluster</name>
        <dbReference type="ChEBI" id="CHEBI:49883"/>
        <label>1</label>
    </ligand>
</feature>